<name>TES_NEONE</name>
<protein>
    <recommendedName>
        <fullName>Testin</fullName>
    </recommendedName>
</protein>
<accession>Q07E40</accession>
<reference key="1">
    <citation type="submission" date="2006-09" db="EMBL/GenBank/DDBJ databases">
        <title>NISC comparative sequencing initiative.</title>
        <authorList>
            <person name="Antonellis A."/>
            <person name="Ayele K."/>
            <person name="Benjamin B."/>
            <person name="Blakesley R.W."/>
            <person name="Boakye A."/>
            <person name="Bouffard G.G."/>
            <person name="Brinkley C."/>
            <person name="Brooks S."/>
            <person name="Chu G."/>
            <person name="Coleman H."/>
            <person name="Engle J."/>
            <person name="Gestole M."/>
            <person name="Greene A."/>
            <person name="Guan X."/>
            <person name="Gupta J."/>
            <person name="Haghighi P."/>
            <person name="Han J."/>
            <person name="Hansen N."/>
            <person name="Ho S.-L."/>
            <person name="Hu P."/>
            <person name="Hunter G."/>
            <person name="Hurle B."/>
            <person name="Idol J.R."/>
            <person name="Kwong P."/>
            <person name="Laric P."/>
            <person name="Larson S."/>
            <person name="Lee-Lin S.-Q."/>
            <person name="Legaspi R."/>
            <person name="Madden M."/>
            <person name="Maduro Q.L."/>
            <person name="Maduro V.B."/>
            <person name="Margulies E.H."/>
            <person name="Masiello C."/>
            <person name="Maskeri B."/>
            <person name="McDowell J."/>
            <person name="Mojidi H.A."/>
            <person name="Mullikin J.C."/>
            <person name="Oestreicher J.S."/>
            <person name="Park M."/>
            <person name="Portnoy M.E."/>
            <person name="Prasad A."/>
            <person name="Puri O."/>
            <person name="Reddix-Dugue N."/>
            <person name="Schandler K."/>
            <person name="Schueler M.G."/>
            <person name="Sison C."/>
            <person name="Stantripop S."/>
            <person name="Stephen E."/>
            <person name="Taye A."/>
            <person name="Thomas J.W."/>
            <person name="Thomas P.J."/>
            <person name="Tsipouri V."/>
            <person name="Ung L."/>
            <person name="Vogt J.L."/>
            <person name="Wetherby K.D."/>
            <person name="Young A."/>
            <person name="Green E.D."/>
        </authorList>
    </citation>
    <scope>NUCLEOTIDE SEQUENCE [LARGE SCALE GENOMIC DNA]</scope>
</reference>
<evidence type="ECO:0000250" key="1"/>
<evidence type="ECO:0000255" key="2">
    <source>
        <dbReference type="PROSITE-ProRule" id="PRU00125"/>
    </source>
</evidence>
<evidence type="ECO:0000255" key="3">
    <source>
        <dbReference type="PROSITE-ProRule" id="PRU00636"/>
    </source>
</evidence>
<evidence type="ECO:0000256" key="4">
    <source>
        <dbReference type="SAM" id="MobiDB-lite"/>
    </source>
</evidence>
<evidence type="ECO:0000305" key="5"/>
<keyword id="KW-0965">Cell junction</keyword>
<keyword id="KW-0963">Cytoplasm</keyword>
<keyword id="KW-0440">LIM domain</keyword>
<keyword id="KW-0479">Metal-binding</keyword>
<keyword id="KW-0677">Repeat</keyword>
<keyword id="KW-0862">Zinc</keyword>
<comment type="function">
    <text evidence="1">Scaffold protein that may play a role in cell adhesion, cell spreading and in the reorganization of the actin cytoskeleton. Plays a role in the regulation of cell proliferation. May act as a tumor suppressor (By similarity).</text>
</comment>
<comment type="subunit">
    <text evidence="1">Interacts via LIM domain 1 with ZYX. Interacts (via LIM domain 3) with ENAH and VASP. Interacts with ALKBH4, talin, actin, alpha-actinin, GRIP1 and PXN (By similarity). Interacts (via LIM domain 2) with ACTL7A (via N-terminus). Heterodimer with ACTL7A; the heterodimer interacts with ENAH to form a heterotrimer (By similarity).</text>
</comment>
<comment type="subcellular location">
    <subcellularLocation>
        <location evidence="1">Cytoplasm</location>
    </subcellularLocation>
    <subcellularLocation>
        <location evidence="1">Cell junction</location>
        <location evidence="1">Focal adhesion</location>
    </subcellularLocation>
    <text evidence="1">Detected along actin stress fibers.</text>
</comment>
<comment type="domain">
    <text evidence="1">The N-terminal and the C-terminal halves of the protein can associate with each other, thereby hindering interactions with ZYX.</text>
</comment>
<comment type="similarity">
    <text evidence="5">Belongs to the prickle / espinas / testin family.</text>
</comment>
<organism>
    <name type="scientific">Neofelis nebulosa</name>
    <name type="common">Clouded leopard</name>
    <dbReference type="NCBI Taxonomy" id="61452"/>
    <lineage>
        <taxon>Eukaryota</taxon>
        <taxon>Metazoa</taxon>
        <taxon>Chordata</taxon>
        <taxon>Craniata</taxon>
        <taxon>Vertebrata</taxon>
        <taxon>Euteleostomi</taxon>
        <taxon>Mammalia</taxon>
        <taxon>Eutheria</taxon>
        <taxon>Laurasiatheria</taxon>
        <taxon>Carnivora</taxon>
        <taxon>Feliformia</taxon>
        <taxon>Felidae</taxon>
        <taxon>Pantherinae</taxon>
        <taxon>Neofelis</taxon>
    </lineage>
</organism>
<feature type="chain" id="PRO_0000260333" description="Testin">
    <location>
        <begin position="1"/>
        <end position="421"/>
    </location>
</feature>
<feature type="domain" description="PET" evidence="3">
    <location>
        <begin position="92"/>
        <end position="199"/>
    </location>
</feature>
<feature type="domain" description="LIM zinc-binding 1" evidence="2">
    <location>
        <begin position="234"/>
        <end position="297"/>
    </location>
</feature>
<feature type="domain" description="LIM zinc-binding 2" evidence="2">
    <location>
        <begin position="299"/>
        <end position="359"/>
    </location>
</feature>
<feature type="domain" description="LIM zinc-binding 3" evidence="2">
    <location>
        <begin position="362"/>
        <end position="421"/>
    </location>
</feature>
<feature type="region of interest" description="Disordered" evidence="4">
    <location>
        <begin position="133"/>
        <end position="164"/>
    </location>
</feature>
<feature type="compositionally biased region" description="Basic and acidic residues" evidence="4">
    <location>
        <begin position="155"/>
        <end position="164"/>
    </location>
</feature>
<proteinExistence type="inferred from homology"/>
<gene>
    <name type="primary">TES</name>
</gene>
<dbReference type="EMBL" id="DP000182">
    <property type="protein sequence ID" value="ABI93636.1"/>
    <property type="molecule type" value="Genomic_DNA"/>
</dbReference>
<dbReference type="RefSeq" id="XP_058580502.1">
    <property type="nucleotide sequence ID" value="XM_058724519.1"/>
</dbReference>
<dbReference type="SMR" id="Q07E40"/>
<dbReference type="GeneID" id="131509098"/>
<dbReference type="GO" id="GO:0005737">
    <property type="term" value="C:cytoplasm"/>
    <property type="evidence" value="ECO:0000250"/>
    <property type="project" value="UniProtKB"/>
</dbReference>
<dbReference type="GO" id="GO:0005925">
    <property type="term" value="C:focal adhesion"/>
    <property type="evidence" value="ECO:0007669"/>
    <property type="project" value="UniProtKB-SubCell"/>
</dbReference>
<dbReference type="GO" id="GO:0008270">
    <property type="term" value="F:zinc ion binding"/>
    <property type="evidence" value="ECO:0000250"/>
    <property type="project" value="UniProtKB"/>
</dbReference>
<dbReference type="GO" id="GO:0008285">
    <property type="term" value="P:negative regulation of cell population proliferation"/>
    <property type="evidence" value="ECO:0000250"/>
    <property type="project" value="UniProtKB"/>
</dbReference>
<dbReference type="CDD" id="cd09413">
    <property type="entry name" value="LIM1_Testin"/>
    <property type="match status" value="1"/>
</dbReference>
<dbReference type="CDD" id="cd09416">
    <property type="entry name" value="LIM2_Testin"/>
    <property type="match status" value="1"/>
</dbReference>
<dbReference type="CDD" id="cd09419">
    <property type="entry name" value="LIM3_Testin"/>
    <property type="match status" value="1"/>
</dbReference>
<dbReference type="CDD" id="cd09829">
    <property type="entry name" value="PET_testin"/>
    <property type="match status" value="1"/>
</dbReference>
<dbReference type="FunFam" id="2.10.110.10:FF:000061">
    <property type="entry name" value="Testin"/>
    <property type="match status" value="1"/>
</dbReference>
<dbReference type="FunFam" id="2.10.110.10:FF:000065">
    <property type="entry name" value="Testin"/>
    <property type="match status" value="1"/>
</dbReference>
<dbReference type="FunFam" id="2.10.110.10:FF:000005">
    <property type="entry name" value="Testin isoform 1"/>
    <property type="match status" value="1"/>
</dbReference>
<dbReference type="Gene3D" id="2.10.110.10">
    <property type="entry name" value="Cysteine Rich Protein"/>
    <property type="match status" value="3"/>
</dbReference>
<dbReference type="InterPro" id="IPR034958">
    <property type="entry name" value="LIM1_Testin"/>
</dbReference>
<dbReference type="InterPro" id="IPR034959">
    <property type="entry name" value="LIM2_Testin"/>
</dbReference>
<dbReference type="InterPro" id="IPR034960">
    <property type="entry name" value="LIM3_Testin"/>
</dbReference>
<dbReference type="InterPro" id="IPR010442">
    <property type="entry name" value="PET_domain"/>
</dbReference>
<dbReference type="InterPro" id="IPR033724">
    <property type="entry name" value="PET_testin"/>
</dbReference>
<dbReference type="InterPro" id="IPR047120">
    <property type="entry name" value="Pk/Esn/Tes"/>
</dbReference>
<dbReference type="InterPro" id="IPR001781">
    <property type="entry name" value="Znf_LIM"/>
</dbReference>
<dbReference type="PANTHER" id="PTHR24211">
    <property type="entry name" value="LIM DOMAIN-CONTAINING PROTEIN"/>
    <property type="match status" value="1"/>
</dbReference>
<dbReference type="PANTHER" id="PTHR24211:SF1">
    <property type="entry name" value="TESTIN"/>
    <property type="match status" value="1"/>
</dbReference>
<dbReference type="Pfam" id="PF00412">
    <property type="entry name" value="LIM"/>
    <property type="match status" value="3"/>
</dbReference>
<dbReference type="Pfam" id="PF06297">
    <property type="entry name" value="PET"/>
    <property type="match status" value="1"/>
</dbReference>
<dbReference type="SMART" id="SM00132">
    <property type="entry name" value="LIM"/>
    <property type="match status" value="3"/>
</dbReference>
<dbReference type="SUPFAM" id="SSF57716">
    <property type="entry name" value="Glucocorticoid receptor-like (DNA-binding domain)"/>
    <property type="match status" value="2"/>
</dbReference>
<dbReference type="PROSITE" id="PS00478">
    <property type="entry name" value="LIM_DOMAIN_1"/>
    <property type="match status" value="2"/>
</dbReference>
<dbReference type="PROSITE" id="PS50023">
    <property type="entry name" value="LIM_DOMAIN_2"/>
    <property type="match status" value="3"/>
</dbReference>
<dbReference type="PROSITE" id="PS51303">
    <property type="entry name" value="PET"/>
    <property type="match status" value="1"/>
</dbReference>
<sequence>MDLEAKVKKMGLGHEQGFGAPCLKCKEKCEGFELHFWRKICRNCKCGQEEHDVLLSNEEDRKVGKLFEDTKYTTLIAKLKTDGIPMYKRNVMILTNPVAAKKNVSINTVTYEWAPPVQNQALARQYMQMLPKEKQPVAGSEGAQYRKKQLAKQLPAHDQDPSKCHELSPKEVKEMEQFVKKYKSEALGVGDVKLPREMDTQGPNRMLLPGGDRSTTAAVGAMEGKSAEPKRTQYSCYCCKLSMKEGDPAIYAERAGYDKLWHPACFVCSACQELLVDMIYFWKNGKLYCGRHYCDSEKPRCAGCDELIFSNEYTQAENQNWHLKHFCCFDCDNILAGEIYVMVNDKPVCKPCYVKNHAVVCQGCHNAIDPEVQRVTYNNFSWHASTECFLCSCCSKCLIGQKFMPVEGMVFCSVECKKMMS</sequence>